<comment type="catalytic activity">
    <reaction>
        <text>1-(5-phospho-beta-D-ribosyl)-ATP + H2O = 1-(5-phospho-beta-D-ribosyl)-5'-AMP + diphosphate + H(+)</text>
        <dbReference type="Rhea" id="RHEA:22828"/>
        <dbReference type="ChEBI" id="CHEBI:15377"/>
        <dbReference type="ChEBI" id="CHEBI:15378"/>
        <dbReference type="ChEBI" id="CHEBI:33019"/>
        <dbReference type="ChEBI" id="CHEBI:59457"/>
        <dbReference type="ChEBI" id="CHEBI:73183"/>
        <dbReference type="EC" id="3.6.1.31"/>
    </reaction>
</comment>
<comment type="pathway">
    <text>Amino-acid biosynthesis; L-histidine biosynthesis; L-histidine from 5-phospho-alpha-D-ribose 1-diphosphate: step 2/9.</text>
</comment>
<comment type="subcellular location">
    <subcellularLocation>
        <location evidence="1">Cytoplasm</location>
    </subcellularLocation>
</comment>
<comment type="similarity">
    <text evidence="2">Belongs to the PRA-PH family.</text>
</comment>
<gene>
    <name type="primary">hisE</name>
</gene>
<dbReference type="EC" id="3.6.1.31"/>
<dbReference type="EMBL" id="U48404">
    <property type="protein sequence ID" value="AAA92107.1"/>
    <property type="molecule type" value="Genomic_DNA"/>
</dbReference>
<dbReference type="SMR" id="Q43926"/>
<dbReference type="UniPathway" id="UPA00031">
    <property type="reaction ID" value="UER00007"/>
</dbReference>
<dbReference type="GO" id="GO:0005737">
    <property type="term" value="C:cytoplasm"/>
    <property type="evidence" value="ECO:0007669"/>
    <property type="project" value="UniProtKB-SubCell"/>
</dbReference>
<dbReference type="GO" id="GO:0005524">
    <property type="term" value="F:ATP binding"/>
    <property type="evidence" value="ECO:0007669"/>
    <property type="project" value="UniProtKB-KW"/>
</dbReference>
<dbReference type="GO" id="GO:0004636">
    <property type="term" value="F:phosphoribosyl-ATP diphosphatase activity"/>
    <property type="evidence" value="ECO:0007669"/>
    <property type="project" value="UniProtKB-UniRule"/>
</dbReference>
<dbReference type="GO" id="GO:0000105">
    <property type="term" value="P:L-histidine biosynthetic process"/>
    <property type="evidence" value="ECO:0007669"/>
    <property type="project" value="UniProtKB-UniRule"/>
</dbReference>
<dbReference type="CDD" id="cd11534">
    <property type="entry name" value="NTP-PPase_HisIE_like"/>
    <property type="match status" value="1"/>
</dbReference>
<dbReference type="Gene3D" id="1.10.287.1080">
    <property type="entry name" value="MazG-like"/>
    <property type="match status" value="1"/>
</dbReference>
<dbReference type="HAMAP" id="MF_01020">
    <property type="entry name" value="HisE"/>
    <property type="match status" value="1"/>
</dbReference>
<dbReference type="InterPro" id="IPR008179">
    <property type="entry name" value="HisE"/>
</dbReference>
<dbReference type="InterPro" id="IPR021130">
    <property type="entry name" value="PRib-ATP_PPHydrolase-like"/>
</dbReference>
<dbReference type="NCBIfam" id="TIGR03188">
    <property type="entry name" value="histidine_hisI"/>
    <property type="match status" value="1"/>
</dbReference>
<dbReference type="NCBIfam" id="NF001611">
    <property type="entry name" value="PRK00400.1-3"/>
    <property type="match status" value="1"/>
</dbReference>
<dbReference type="PANTHER" id="PTHR42945">
    <property type="entry name" value="HISTIDINE BIOSYNTHESIS BIFUNCTIONAL PROTEIN"/>
    <property type="match status" value="1"/>
</dbReference>
<dbReference type="PANTHER" id="PTHR42945:SF9">
    <property type="entry name" value="HISTIDINE BIOSYNTHESIS BIFUNCTIONAL PROTEIN HISIE"/>
    <property type="match status" value="1"/>
</dbReference>
<dbReference type="Pfam" id="PF01503">
    <property type="entry name" value="PRA-PH"/>
    <property type="match status" value="1"/>
</dbReference>
<dbReference type="SUPFAM" id="SSF101386">
    <property type="entry name" value="all-alpha NTP pyrophosphatases"/>
    <property type="match status" value="1"/>
</dbReference>
<reference key="1">
    <citation type="submission" date="1996-02" db="EMBL/GenBank/DDBJ databases">
        <authorList>
            <person name="Yates M."/>
            <person name="Souza E.M."/>
        </authorList>
    </citation>
    <scope>NUCLEOTIDE SEQUENCE [GENOMIC DNA]</scope>
</reference>
<protein>
    <recommendedName>
        <fullName>Phosphoribosyl-ATP pyrophosphatase</fullName>
        <shortName>PRA-PH</shortName>
        <ecNumber>3.6.1.31</ecNumber>
    </recommendedName>
</protein>
<name>HIS2_AZOCH</name>
<accession>Q43926</accession>
<organism>
    <name type="scientific">Azotobacter chroococcum mcd 1</name>
    <dbReference type="NCBI Taxonomy" id="355"/>
    <lineage>
        <taxon>Bacteria</taxon>
        <taxon>Pseudomonadati</taxon>
        <taxon>Pseudomonadota</taxon>
        <taxon>Gammaproteobacteria</taxon>
        <taxon>Pseudomonadales</taxon>
        <taxon>Pseudomonadaceae</taxon>
        <taxon>Azotobacter</taxon>
    </lineage>
</organism>
<proteinExistence type="inferred from homology"/>
<feature type="chain" id="PRO_0000136342" description="Phosphoribosyl-ATP pyrophosphatase">
    <location>
        <begin position="1"/>
        <end position="110"/>
    </location>
</feature>
<sequence length="110" mass="11909">MSDTLNQLAEVLEARKNAAPDSSYVASLYHKGLNKILEKVGEESVETILAAKDAAASGDCSELIYETADLWFHSLVMLAALGQHPQAVLDELERRFGLSGHAEKAARPKS</sequence>
<evidence type="ECO:0000250" key="1"/>
<evidence type="ECO:0000305" key="2"/>
<keyword id="KW-0028">Amino-acid biosynthesis</keyword>
<keyword id="KW-0067">ATP-binding</keyword>
<keyword id="KW-0963">Cytoplasm</keyword>
<keyword id="KW-0368">Histidine biosynthesis</keyword>
<keyword id="KW-0378">Hydrolase</keyword>
<keyword id="KW-0547">Nucleotide-binding</keyword>